<feature type="transit peptide" description="Chloroplast" evidence="1">
    <location>
        <begin position="1"/>
        <end position="59"/>
    </location>
</feature>
<feature type="chain" id="PRO_0000250216" description="Small ribosomal subunit protein bS6c">
    <location>
        <begin position="60"/>
        <end position="207"/>
    </location>
</feature>
<feature type="region of interest" description="Disordered" evidence="2">
    <location>
        <begin position="69"/>
        <end position="99"/>
    </location>
</feature>
<feature type="compositionally biased region" description="Low complexity" evidence="2">
    <location>
        <begin position="77"/>
        <end position="86"/>
    </location>
</feature>
<sequence length="207" mass="22761">MASSLCVSNSTICPLPNVSSQPLLSFSHSLRPFISKSKPMCASIQKRDGSQFVVKSQALDFSGTFFEGGFGSDDDPTSPSGSGVSTALEDKPEPQCPPGLRQYETMAVLRPDMSEDERLGLTQKYEELLVAGGGMYVEVFNRGVIPLAYSIRKKNKAGETNTYLDGIYLLFTYFTKPESIVPLETVLTADDDIIRSSSFKIKKRKYN</sequence>
<comment type="function">
    <text evidence="1">Binds together with bS18 to 16S ribosomal RNA.</text>
</comment>
<comment type="subunit">
    <text evidence="1">Part of the 30S ribosomal subunit.</text>
</comment>
<comment type="subcellular location">
    <subcellularLocation>
        <location evidence="1">Plastid</location>
        <location evidence="1">Chloroplast</location>
    </subcellularLocation>
</comment>
<comment type="similarity">
    <text evidence="4">Belongs to the bacterial ribosomal protein bS6 family.</text>
</comment>
<comment type="sequence caution" evidence="4">
    <conflict type="erroneous initiation">
        <sequence resource="EMBL-CDS" id="AAF19690"/>
    </conflict>
</comment>
<organism>
    <name type="scientific">Arabidopsis thaliana</name>
    <name type="common">Mouse-ear cress</name>
    <dbReference type="NCBI Taxonomy" id="3702"/>
    <lineage>
        <taxon>Eukaryota</taxon>
        <taxon>Viridiplantae</taxon>
        <taxon>Streptophyta</taxon>
        <taxon>Embryophyta</taxon>
        <taxon>Tracheophyta</taxon>
        <taxon>Spermatophyta</taxon>
        <taxon>Magnoliopsida</taxon>
        <taxon>eudicotyledons</taxon>
        <taxon>Gunneridae</taxon>
        <taxon>Pentapetalae</taxon>
        <taxon>rosids</taxon>
        <taxon>malvids</taxon>
        <taxon>Brassicales</taxon>
        <taxon>Brassicaceae</taxon>
        <taxon>Camelineae</taxon>
        <taxon>Arabidopsis</taxon>
    </lineage>
</organism>
<name>RR6_ARATH</name>
<keyword id="KW-0150">Chloroplast</keyword>
<keyword id="KW-0934">Plastid</keyword>
<keyword id="KW-1185">Reference proteome</keyword>
<keyword id="KW-0687">Ribonucleoprotein</keyword>
<keyword id="KW-0689">Ribosomal protein</keyword>
<keyword id="KW-0694">RNA-binding</keyword>
<keyword id="KW-0699">rRNA-binding</keyword>
<keyword id="KW-0809">Transit peptide</keyword>
<proteinExistence type="evidence at transcript level"/>
<evidence type="ECO:0000250" key="1"/>
<evidence type="ECO:0000256" key="2">
    <source>
        <dbReference type="SAM" id="MobiDB-lite"/>
    </source>
</evidence>
<evidence type="ECO:0000303" key="3">
    <source>
    </source>
</evidence>
<evidence type="ECO:0000305" key="4"/>
<gene>
    <name type="primary">RPS6</name>
    <name type="ordered locus">At1g64510</name>
    <name type="ORF">F1N19.8</name>
</gene>
<accession>Q8VY91</accession>
<accession>Q9SGW4</accession>
<protein>
    <recommendedName>
        <fullName evidence="3">Small ribosomal subunit protein bS6c</fullName>
    </recommendedName>
    <alternativeName>
        <fullName>30S ribosomal protein S6 alpha, chloroplastic</fullName>
    </alternativeName>
</protein>
<reference key="1">
    <citation type="journal article" date="2000" name="Nature">
        <title>Sequence and analysis of chromosome 1 of the plant Arabidopsis thaliana.</title>
        <authorList>
            <person name="Theologis A."/>
            <person name="Ecker J.R."/>
            <person name="Palm C.J."/>
            <person name="Federspiel N.A."/>
            <person name="Kaul S."/>
            <person name="White O."/>
            <person name="Alonso J."/>
            <person name="Altafi H."/>
            <person name="Araujo R."/>
            <person name="Bowman C.L."/>
            <person name="Brooks S.Y."/>
            <person name="Buehler E."/>
            <person name="Chan A."/>
            <person name="Chao Q."/>
            <person name="Chen H."/>
            <person name="Cheuk R.F."/>
            <person name="Chin C.W."/>
            <person name="Chung M.K."/>
            <person name="Conn L."/>
            <person name="Conway A.B."/>
            <person name="Conway A.R."/>
            <person name="Creasy T.H."/>
            <person name="Dewar K."/>
            <person name="Dunn P."/>
            <person name="Etgu P."/>
            <person name="Feldblyum T.V."/>
            <person name="Feng J.-D."/>
            <person name="Fong B."/>
            <person name="Fujii C.Y."/>
            <person name="Gill J.E."/>
            <person name="Goldsmith A.D."/>
            <person name="Haas B."/>
            <person name="Hansen N.F."/>
            <person name="Hughes B."/>
            <person name="Huizar L."/>
            <person name="Hunter J.L."/>
            <person name="Jenkins J."/>
            <person name="Johnson-Hopson C."/>
            <person name="Khan S."/>
            <person name="Khaykin E."/>
            <person name="Kim C.J."/>
            <person name="Koo H.L."/>
            <person name="Kremenetskaia I."/>
            <person name="Kurtz D.B."/>
            <person name="Kwan A."/>
            <person name="Lam B."/>
            <person name="Langin-Hooper S."/>
            <person name="Lee A."/>
            <person name="Lee J.M."/>
            <person name="Lenz C.A."/>
            <person name="Li J.H."/>
            <person name="Li Y.-P."/>
            <person name="Lin X."/>
            <person name="Liu S.X."/>
            <person name="Liu Z.A."/>
            <person name="Luros J.S."/>
            <person name="Maiti R."/>
            <person name="Marziali A."/>
            <person name="Militscher J."/>
            <person name="Miranda M."/>
            <person name="Nguyen M."/>
            <person name="Nierman W.C."/>
            <person name="Osborne B.I."/>
            <person name="Pai G."/>
            <person name="Peterson J."/>
            <person name="Pham P.K."/>
            <person name="Rizzo M."/>
            <person name="Rooney T."/>
            <person name="Rowley D."/>
            <person name="Sakano H."/>
            <person name="Salzberg S.L."/>
            <person name="Schwartz J.R."/>
            <person name="Shinn P."/>
            <person name="Southwick A.M."/>
            <person name="Sun H."/>
            <person name="Tallon L.J."/>
            <person name="Tambunga G."/>
            <person name="Toriumi M.J."/>
            <person name="Town C.D."/>
            <person name="Utterback T."/>
            <person name="Van Aken S."/>
            <person name="Vaysberg M."/>
            <person name="Vysotskaia V.S."/>
            <person name="Walker M."/>
            <person name="Wu D."/>
            <person name="Yu G."/>
            <person name="Fraser C.M."/>
            <person name="Venter J.C."/>
            <person name="Davis R.W."/>
        </authorList>
    </citation>
    <scope>NUCLEOTIDE SEQUENCE [LARGE SCALE GENOMIC DNA]</scope>
    <source>
        <strain>cv. Columbia</strain>
    </source>
</reference>
<reference key="2">
    <citation type="journal article" date="2017" name="Plant J.">
        <title>Araport11: a complete reannotation of the Arabidopsis thaliana reference genome.</title>
        <authorList>
            <person name="Cheng C.Y."/>
            <person name="Krishnakumar V."/>
            <person name="Chan A.P."/>
            <person name="Thibaud-Nissen F."/>
            <person name="Schobel S."/>
            <person name="Town C.D."/>
        </authorList>
    </citation>
    <scope>GENOME REANNOTATION</scope>
    <source>
        <strain>cv. Columbia</strain>
    </source>
</reference>
<reference key="3">
    <citation type="journal article" date="2003" name="Science">
        <title>Empirical analysis of transcriptional activity in the Arabidopsis genome.</title>
        <authorList>
            <person name="Yamada K."/>
            <person name="Lim J."/>
            <person name="Dale J.M."/>
            <person name="Chen H."/>
            <person name="Shinn P."/>
            <person name="Palm C.J."/>
            <person name="Southwick A.M."/>
            <person name="Wu H.C."/>
            <person name="Kim C.J."/>
            <person name="Nguyen M."/>
            <person name="Pham P.K."/>
            <person name="Cheuk R.F."/>
            <person name="Karlin-Newmann G."/>
            <person name="Liu S.X."/>
            <person name="Lam B."/>
            <person name="Sakano H."/>
            <person name="Wu T."/>
            <person name="Yu G."/>
            <person name="Miranda M."/>
            <person name="Quach H.L."/>
            <person name="Tripp M."/>
            <person name="Chang C.H."/>
            <person name="Lee J.M."/>
            <person name="Toriumi M.J."/>
            <person name="Chan M.M."/>
            <person name="Tang C.C."/>
            <person name="Onodera C.S."/>
            <person name="Deng J.M."/>
            <person name="Akiyama K."/>
            <person name="Ansari Y."/>
            <person name="Arakawa T."/>
            <person name="Banh J."/>
            <person name="Banno F."/>
            <person name="Bowser L."/>
            <person name="Brooks S.Y."/>
            <person name="Carninci P."/>
            <person name="Chao Q."/>
            <person name="Choy N."/>
            <person name="Enju A."/>
            <person name="Goldsmith A.D."/>
            <person name="Gurjal M."/>
            <person name="Hansen N.F."/>
            <person name="Hayashizaki Y."/>
            <person name="Johnson-Hopson C."/>
            <person name="Hsuan V.W."/>
            <person name="Iida K."/>
            <person name="Karnes M."/>
            <person name="Khan S."/>
            <person name="Koesema E."/>
            <person name="Ishida J."/>
            <person name="Jiang P.X."/>
            <person name="Jones T."/>
            <person name="Kawai J."/>
            <person name="Kamiya A."/>
            <person name="Meyers C."/>
            <person name="Nakajima M."/>
            <person name="Narusaka M."/>
            <person name="Seki M."/>
            <person name="Sakurai T."/>
            <person name="Satou M."/>
            <person name="Tamse R."/>
            <person name="Vaysberg M."/>
            <person name="Wallender E.K."/>
            <person name="Wong C."/>
            <person name="Yamamura Y."/>
            <person name="Yuan S."/>
            <person name="Shinozaki K."/>
            <person name="Davis R.W."/>
            <person name="Theologis A."/>
            <person name="Ecker J.R."/>
        </authorList>
    </citation>
    <scope>NUCLEOTIDE SEQUENCE [LARGE SCALE MRNA]</scope>
    <source>
        <strain>cv. Columbia</strain>
    </source>
</reference>
<reference key="4">
    <citation type="submission" date="2002-03" db="EMBL/GenBank/DDBJ databases">
        <title>Full-length cDNA from Arabidopsis thaliana.</title>
        <authorList>
            <person name="Brover V.V."/>
            <person name="Troukhan M.E."/>
            <person name="Alexandrov N.A."/>
            <person name="Lu Y.-P."/>
            <person name="Flavell R.B."/>
            <person name="Feldmann K.A."/>
        </authorList>
    </citation>
    <scope>NUCLEOTIDE SEQUENCE [LARGE SCALE MRNA]</scope>
</reference>
<reference key="5">
    <citation type="journal article" date="2023" name="Plant Cell">
        <title>An updated nomenclature for plant ribosomal protein genes.</title>
        <authorList>
            <person name="Scarpin M.R."/>
            <person name="Busche M."/>
            <person name="Martinez R.E."/>
            <person name="Harper L.C."/>
            <person name="Reiser L."/>
            <person name="Szakonyi D."/>
            <person name="Merchante C."/>
            <person name="Lan T."/>
            <person name="Xiong W."/>
            <person name="Mo B."/>
            <person name="Tang G."/>
            <person name="Chen X."/>
            <person name="Bailey-Serres J."/>
            <person name="Browning K.S."/>
            <person name="Brunkard J.O."/>
        </authorList>
    </citation>
    <scope>NOMENCLATURE</scope>
</reference>
<dbReference type="EMBL" id="AC009519">
    <property type="protein sequence ID" value="AAF19690.1"/>
    <property type="status" value="ALT_INIT"/>
    <property type="molecule type" value="Genomic_DNA"/>
</dbReference>
<dbReference type="EMBL" id="CP002684">
    <property type="protein sequence ID" value="AEE34248.1"/>
    <property type="molecule type" value="Genomic_DNA"/>
</dbReference>
<dbReference type="EMBL" id="AY072344">
    <property type="protein sequence ID" value="AAL61951.1"/>
    <property type="molecule type" value="mRNA"/>
</dbReference>
<dbReference type="EMBL" id="AY114581">
    <property type="protein sequence ID" value="AAM47900.1"/>
    <property type="molecule type" value="mRNA"/>
</dbReference>
<dbReference type="EMBL" id="AY085527">
    <property type="protein sequence ID" value="AAM62751.1"/>
    <property type="molecule type" value="mRNA"/>
</dbReference>
<dbReference type="RefSeq" id="NP_001322828.1">
    <property type="nucleotide sequence ID" value="NM_001334165.1"/>
</dbReference>
<dbReference type="RefSeq" id="NP_176632.1">
    <property type="nucleotide sequence ID" value="NM_105126.4"/>
</dbReference>
<dbReference type="SMR" id="Q8VY91"/>
<dbReference type="BioGRID" id="27980">
    <property type="interactions" value="1"/>
</dbReference>
<dbReference type="FunCoup" id="Q8VY91">
    <property type="interactions" value="889"/>
</dbReference>
<dbReference type="STRING" id="3702.Q8VY91"/>
<dbReference type="GlyGen" id="Q8VY91">
    <property type="glycosylation" value="1 site"/>
</dbReference>
<dbReference type="iPTMnet" id="Q8VY91"/>
<dbReference type="PaxDb" id="3702-AT1G64510.1"/>
<dbReference type="ProteomicsDB" id="228198"/>
<dbReference type="EnsemblPlants" id="AT1G64510.1">
    <property type="protein sequence ID" value="AT1G64510.1"/>
    <property type="gene ID" value="AT1G64510"/>
</dbReference>
<dbReference type="GeneID" id="842759"/>
<dbReference type="Gramene" id="AT1G64510.1">
    <property type="protein sequence ID" value="AT1G64510.1"/>
    <property type="gene ID" value="AT1G64510"/>
</dbReference>
<dbReference type="KEGG" id="ath:AT1G64510"/>
<dbReference type="Araport" id="AT1G64510"/>
<dbReference type="TAIR" id="AT1G64510">
    <property type="gene designation" value="PRPS6"/>
</dbReference>
<dbReference type="eggNOG" id="ENOG502RXHX">
    <property type="taxonomic scope" value="Eukaryota"/>
</dbReference>
<dbReference type="HOGENOM" id="CLU_110467_0_0_1"/>
<dbReference type="InParanoid" id="Q8VY91"/>
<dbReference type="OMA" id="RSMSFKI"/>
<dbReference type="OrthoDB" id="2014413at2759"/>
<dbReference type="PhylomeDB" id="Q8VY91"/>
<dbReference type="PRO" id="PR:Q8VY91"/>
<dbReference type="Proteomes" id="UP000006548">
    <property type="component" value="Chromosome 1"/>
</dbReference>
<dbReference type="ExpressionAtlas" id="Q8VY91">
    <property type="expression patterns" value="baseline and differential"/>
</dbReference>
<dbReference type="GO" id="GO:0009507">
    <property type="term" value="C:chloroplast"/>
    <property type="evidence" value="ECO:0007005"/>
    <property type="project" value="TAIR"/>
</dbReference>
<dbReference type="GO" id="GO:0009535">
    <property type="term" value="C:chloroplast thylakoid membrane"/>
    <property type="evidence" value="ECO:0007005"/>
    <property type="project" value="TAIR"/>
</dbReference>
<dbReference type="GO" id="GO:0005634">
    <property type="term" value="C:nucleus"/>
    <property type="evidence" value="ECO:0007005"/>
    <property type="project" value="TAIR"/>
</dbReference>
<dbReference type="GO" id="GO:1990904">
    <property type="term" value="C:ribonucleoprotein complex"/>
    <property type="evidence" value="ECO:0007669"/>
    <property type="project" value="UniProtKB-KW"/>
</dbReference>
<dbReference type="GO" id="GO:0005840">
    <property type="term" value="C:ribosome"/>
    <property type="evidence" value="ECO:0007669"/>
    <property type="project" value="UniProtKB-KW"/>
</dbReference>
<dbReference type="GO" id="GO:0009579">
    <property type="term" value="C:thylakoid"/>
    <property type="evidence" value="ECO:0007005"/>
    <property type="project" value="TAIR"/>
</dbReference>
<dbReference type="GO" id="GO:0003729">
    <property type="term" value="F:mRNA binding"/>
    <property type="evidence" value="ECO:0000314"/>
    <property type="project" value="TAIR"/>
</dbReference>
<dbReference type="GO" id="GO:0019843">
    <property type="term" value="F:rRNA binding"/>
    <property type="evidence" value="ECO:0007669"/>
    <property type="project" value="UniProtKB-KW"/>
</dbReference>
<dbReference type="GO" id="GO:0003735">
    <property type="term" value="F:structural constituent of ribosome"/>
    <property type="evidence" value="ECO:0007669"/>
    <property type="project" value="InterPro"/>
</dbReference>
<dbReference type="GO" id="GO:0006412">
    <property type="term" value="P:translation"/>
    <property type="evidence" value="ECO:0007669"/>
    <property type="project" value="InterPro"/>
</dbReference>
<dbReference type="CDD" id="cd15487">
    <property type="entry name" value="bS6_chloro_cyano"/>
    <property type="match status" value="1"/>
</dbReference>
<dbReference type="FunFam" id="3.30.70.60:FF:000006">
    <property type="entry name" value="30S ribosomal protein S6 alpha, chloroplastic"/>
    <property type="match status" value="1"/>
</dbReference>
<dbReference type="Gene3D" id="3.30.70.60">
    <property type="match status" value="1"/>
</dbReference>
<dbReference type="HAMAP" id="MF_00360">
    <property type="entry name" value="Ribosomal_bS6"/>
    <property type="match status" value="1"/>
</dbReference>
<dbReference type="InterPro" id="IPR000529">
    <property type="entry name" value="Ribosomal_bS6"/>
</dbReference>
<dbReference type="InterPro" id="IPR035980">
    <property type="entry name" value="Ribosomal_bS6_sf"/>
</dbReference>
<dbReference type="InterPro" id="IPR020814">
    <property type="entry name" value="Ribosomal_S6_plastid/chlpt"/>
</dbReference>
<dbReference type="InterPro" id="IPR014717">
    <property type="entry name" value="Transl_elong_EF1B/ribsomal_bS6"/>
</dbReference>
<dbReference type="PANTHER" id="PTHR21011">
    <property type="entry name" value="MITOCHONDRIAL 28S RIBOSOMAL PROTEIN S6"/>
    <property type="match status" value="1"/>
</dbReference>
<dbReference type="PANTHER" id="PTHR21011:SF15">
    <property type="entry name" value="SMALL RIBOSOMAL SUBUNIT PROTEIN BS6C"/>
    <property type="match status" value="1"/>
</dbReference>
<dbReference type="Pfam" id="PF01250">
    <property type="entry name" value="Ribosomal_S6"/>
    <property type="match status" value="1"/>
</dbReference>
<dbReference type="SUPFAM" id="SSF54995">
    <property type="entry name" value="Ribosomal protein S6"/>
    <property type="match status" value="1"/>
</dbReference>